<organism>
    <name type="scientific">Schizosaccharomyces pombe (strain 972 / ATCC 24843)</name>
    <name type="common">Fission yeast</name>
    <dbReference type="NCBI Taxonomy" id="284812"/>
    <lineage>
        <taxon>Eukaryota</taxon>
        <taxon>Fungi</taxon>
        <taxon>Dikarya</taxon>
        <taxon>Ascomycota</taxon>
        <taxon>Taphrinomycotina</taxon>
        <taxon>Schizosaccharomycetes</taxon>
        <taxon>Schizosaccharomycetales</taxon>
        <taxon>Schizosaccharomycetaceae</taxon>
        <taxon>Schizosaccharomyces</taxon>
    </lineage>
</organism>
<protein>
    <recommendedName>
        <fullName>Probable ribosylation factor GTPase-activating protein cnt6</fullName>
    </recommendedName>
</protein>
<gene>
    <name type="primary">cnt6</name>
    <name type="ORF">SPAC26A3.10</name>
</gene>
<sequence>MDGSDSLLKSVDVSKLDNGSTISFRAREDGFLESISSSSGKLVDMVLDSTSKECLPKFSFQNKLDFYFLFSDRVLQLQKERKVLVLIHCESLQSFDSFFAQKLKYADLISSDNVHEIFLPDSNAANIRYHWEWSPPSGKLLEYECKNYSCIAVYSTEDCTLERISKFSYYTVSRCGDSMDDTFFSESQRVTSPLTTSQTVQTQPPQSPEAKTELSLINTKTVIFPENYEDGPSFRSMLHELEQKSSLMKYYCKKIMKRIVQLSDAYDASQVAVMKLSETLSEASNSTSMNMDILLDSYLTKAMDIHATFIQKLNYDLINLLYEPFHNIYSSFIKPIDDRRLEFDEQSKSFYGSLSRYLSAKKDKKGGDSKFFQKEKTFALQRYDYYCFMQDLHDGSIINDINGIFLQYFHRQYDHIALFSNLMNSVLPNLQQLNLKLEKTKWSTTRRDKGREMHRSQVIQTSGRPKSMAPPSPSPISPSFPLHEIQSPMPNRRMAASADDISQTSNFTTEIKGKCISNGGSASPDKIFKEGLLLVFGATELGTDLAMVSKAAWHKHWIVVENGSLWEYANWKDSVKSNVSSISLKHASADKVRKQGRRFCFEVVTPKLKRLYQATSAEEMDSWIEAICEAAKISSFQLSRVATPLSASVRRPSKVFPLFSTSFETTPISRKLSGSGIKKAFSRKGSWNLQQFFRSDNSGTMHMEQLERYHASANIFIQMLRKTDVSNSVCADCGSVKDVTWCSINIPVVLCIECSGIHRSLGTHISKTRSLLLDSLSQQSKVLLCKIGNAAVNRVYEKGLSNPSLKPKPEHNAQVKLAFAQKKYVEHAFIDFAGVDADATLLEGLEQNKISKILLGLAAKPNFEENGVVFLKAVTRDTSKLHLLELLFMNGLLLPDSEQLSEHVSPDMQSYLSQKQFTKYLKE</sequence>
<feature type="chain" id="PRO_0000074230" description="Probable ribosylation factor GTPase-activating protein cnt6">
    <location>
        <begin position="1"/>
        <end position="923"/>
    </location>
</feature>
<feature type="domain" description="PH" evidence="1">
    <location>
        <begin position="526"/>
        <end position="632"/>
    </location>
</feature>
<feature type="domain" description="Arf-GAP" evidence="2">
    <location>
        <begin position="714"/>
        <end position="837"/>
    </location>
</feature>
<feature type="zinc finger region" description="C4-type" evidence="2">
    <location>
        <begin position="730"/>
        <end position="754"/>
    </location>
</feature>
<feature type="region of interest" description="Disordered" evidence="3">
    <location>
        <begin position="444"/>
        <end position="476"/>
    </location>
</feature>
<feature type="compositionally biased region" description="Basic and acidic residues" evidence="3">
    <location>
        <begin position="444"/>
        <end position="455"/>
    </location>
</feature>
<feature type="modified residue" description="Phosphoserine" evidence="5">
    <location>
        <position position="207"/>
    </location>
</feature>
<comment type="function">
    <text evidence="6">GTPase-activating protein for the ADP ribosylation factor family.</text>
</comment>
<comment type="subcellular location">
    <subcellularLocation>
        <location evidence="4">Cytoplasm</location>
    </subcellularLocation>
    <subcellularLocation>
        <location evidence="4">Cell tip</location>
    </subcellularLocation>
</comment>
<proteinExistence type="evidence at protein level"/>
<evidence type="ECO:0000255" key="1">
    <source>
        <dbReference type="PROSITE-ProRule" id="PRU00145"/>
    </source>
</evidence>
<evidence type="ECO:0000255" key="2">
    <source>
        <dbReference type="PROSITE-ProRule" id="PRU00288"/>
    </source>
</evidence>
<evidence type="ECO:0000256" key="3">
    <source>
        <dbReference type="SAM" id="MobiDB-lite"/>
    </source>
</evidence>
<evidence type="ECO:0000269" key="4">
    <source>
    </source>
</evidence>
<evidence type="ECO:0000269" key="5">
    <source>
    </source>
</evidence>
<evidence type="ECO:0000305" key="6"/>
<reference key="1">
    <citation type="journal article" date="2002" name="Nature">
        <title>The genome sequence of Schizosaccharomyces pombe.</title>
        <authorList>
            <person name="Wood V."/>
            <person name="Gwilliam R."/>
            <person name="Rajandream M.A."/>
            <person name="Lyne M.H."/>
            <person name="Lyne R."/>
            <person name="Stewart A."/>
            <person name="Sgouros J.G."/>
            <person name="Peat N."/>
            <person name="Hayles J."/>
            <person name="Baker S.G."/>
            <person name="Basham D."/>
            <person name="Bowman S."/>
            <person name="Brooks K."/>
            <person name="Brown D."/>
            <person name="Brown S."/>
            <person name="Chillingworth T."/>
            <person name="Churcher C.M."/>
            <person name="Collins M."/>
            <person name="Connor R."/>
            <person name="Cronin A."/>
            <person name="Davis P."/>
            <person name="Feltwell T."/>
            <person name="Fraser A."/>
            <person name="Gentles S."/>
            <person name="Goble A."/>
            <person name="Hamlin N."/>
            <person name="Harris D.E."/>
            <person name="Hidalgo J."/>
            <person name="Hodgson G."/>
            <person name="Holroyd S."/>
            <person name="Hornsby T."/>
            <person name="Howarth S."/>
            <person name="Huckle E.J."/>
            <person name="Hunt S."/>
            <person name="Jagels K."/>
            <person name="James K.D."/>
            <person name="Jones L."/>
            <person name="Jones M."/>
            <person name="Leather S."/>
            <person name="McDonald S."/>
            <person name="McLean J."/>
            <person name="Mooney P."/>
            <person name="Moule S."/>
            <person name="Mungall K.L."/>
            <person name="Murphy L.D."/>
            <person name="Niblett D."/>
            <person name="Odell C."/>
            <person name="Oliver K."/>
            <person name="O'Neil S."/>
            <person name="Pearson D."/>
            <person name="Quail M.A."/>
            <person name="Rabbinowitsch E."/>
            <person name="Rutherford K.M."/>
            <person name="Rutter S."/>
            <person name="Saunders D."/>
            <person name="Seeger K."/>
            <person name="Sharp S."/>
            <person name="Skelton J."/>
            <person name="Simmonds M.N."/>
            <person name="Squares R."/>
            <person name="Squares S."/>
            <person name="Stevens K."/>
            <person name="Taylor K."/>
            <person name="Taylor R.G."/>
            <person name="Tivey A."/>
            <person name="Walsh S.V."/>
            <person name="Warren T."/>
            <person name="Whitehead S."/>
            <person name="Woodward J.R."/>
            <person name="Volckaert G."/>
            <person name="Aert R."/>
            <person name="Robben J."/>
            <person name="Grymonprez B."/>
            <person name="Weltjens I."/>
            <person name="Vanstreels E."/>
            <person name="Rieger M."/>
            <person name="Schaefer M."/>
            <person name="Mueller-Auer S."/>
            <person name="Gabel C."/>
            <person name="Fuchs M."/>
            <person name="Duesterhoeft A."/>
            <person name="Fritzc C."/>
            <person name="Holzer E."/>
            <person name="Moestl D."/>
            <person name="Hilbert H."/>
            <person name="Borzym K."/>
            <person name="Langer I."/>
            <person name="Beck A."/>
            <person name="Lehrach H."/>
            <person name="Reinhardt R."/>
            <person name="Pohl T.M."/>
            <person name="Eger P."/>
            <person name="Zimmermann W."/>
            <person name="Wedler H."/>
            <person name="Wambutt R."/>
            <person name="Purnelle B."/>
            <person name="Goffeau A."/>
            <person name="Cadieu E."/>
            <person name="Dreano S."/>
            <person name="Gloux S."/>
            <person name="Lelaure V."/>
            <person name="Mottier S."/>
            <person name="Galibert F."/>
            <person name="Aves S.J."/>
            <person name="Xiang Z."/>
            <person name="Hunt C."/>
            <person name="Moore K."/>
            <person name="Hurst S.M."/>
            <person name="Lucas M."/>
            <person name="Rochet M."/>
            <person name="Gaillardin C."/>
            <person name="Tallada V.A."/>
            <person name="Garzon A."/>
            <person name="Thode G."/>
            <person name="Daga R.R."/>
            <person name="Cruzado L."/>
            <person name="Jimenez J."/>
            <person name="Sanchez M."/>
            <person name="del Rey F."/>
            <person name="Benito J."/>
            <person name="Dominguez A."/>
            <person name="Revuelta J.L."/>
            <person name="Moreno S."/>
            <person name="Armstrong J."/>
            <person name="Forsburg S.L."/>
            <person name="Cerutti L."/>
            <person name="Lowe T."/>
            <person name="McCombie W.R."/>
            <person name="Paulsen I."/>
            <person name="Potashkin J."/>
            <person name="Shpakovski G.V."/>
            <person name="Ussery D."/>
            <person name="Barrell B.G."/>
            <person name="Nurse P."/>
        </authorList>
    </citation>
    <scope>NUCLEOTIDE SEQUENCE [LARGE SCALE GENOMIC DNA]</scope>
    <source>
        <strain>972 / ATCC 24843</strain>
    </source>
</reference>
<reference key="2">
    <citation type="journal article" date="2006" name="Nat. Biotechnol.">
        <title>ORFeome cloning and global analysis of protein localization in the fission yeast Schizosaccharomyces pombe.</title>
        <authorList>
            <person name="Matsuyama A."/>
            <person name="Arai R."/>
            <person name="Yashiroda Y."/>
            <person name="Shirai A."/>
            <person name="Kamata A."/>
            <person name="Sekido S."/>
            <person name="Kobayashi Y."/>
            <person name="Hashimoto A."/>
            <person name="Hamamoto M."/>
            <person name="Hiraoka Y."/>
            <person name="Horinouchi S."/>
            <person name="Yoshida M."/>
        </authorList>
    </citation>
    <scope>SUBCELLULAR LOCATION [LARGE SCALE ANALYSIS]</scope>
</reference>
<reference key="3">
    <citation type="journal article" date="2008" name="J. Proteome Res.">
        <title>Phosphoproteome analysis of fission yeast.</title>
        <authorList>
            <person name="Wilson-Grady J.T."/>
            <person name="Villen J."/>
            <person name="Gygi S.P."/>
        </authorList>
    </citation>
    <scope>PHOSPHORYLATION [LARGE SCALE ANALYSIS] AT SER-207</scope>
    <scope>IDENTIFICATION BY MASS SPECTROMETRY</scope>
</reference>
<name>CNT6_SCHPO</name>
<dbReference type="EMBL" id="CU329670">
    <property type="protein sequence ID" value="CAA93233.1"/>
    <property type="molecule type" value="Genomic_DNA"/>
</dbReference>
<dbReference type="PIR" id="T38398">
    <property type="entry name" value="T38398"/>
</dbReference>
<dbReference type="RefSeq" id="NP_594153.1">
    <property type="nucleotide sequence ID" value="NM_001019577.2"/>
</dbReference>
<dbReference type="SMR" id="Q10165"/>
<dbReference type="BioGRID" id="278551">
    <property type="interactions" value="2"/>
</dbReference>
<dbReference type="FunCoup" id="Q10165">
    <property type="interactions" value="136"/>
</dbReference>
<dbReference type="STRING" id="284812.Q10165"/>
<dbReference type="iPTMnet" id="Q10165"/>
<dbReference type="PaxDb" id="4896-SPAC26A3.10.1"/>
<dbReference type="EnsemblFungi" id="SPAC26A3.10.1">
    <property type="protein sequence ID" value="SPAC26A3.10.1:pep"/>
    <property type="gene ID" value="SPAC26A3.10"/>
</dbReference>
<dbReference type="GeneID" id="2542074"/>
<dbReference type="KEGG" id="spo:2542074"/>
<dbReference type="PomBase" id="SPAC26A3.10">
    <property type="gene designation" value="cnt6"/>
</dbReference>
<dbReference type="VEuPathDB" id="FungiDB:SPAC26A3.10"/>
<dbReference type="eggNOG" id="KOG0521">
    <property type="taxonomic scope" value="Eukaryota"/>
</dbReference>
<dbReference type="HOGENOM" id="CLU_316209_0_0_1"/>
<dbReference type="InParanoid" id="Q10165"/>
<dbReference type="OMA" id="QFRQMIE"/>
<dbReference type="PhylomeDB" id="Q10165"/>
<dbReference type="PRO" id="PR:Q10165"/>
<dbReference type="Proteomes" id="UP000002485">
    <property type="component" value="Chromosome I"/>
</dbReference>
<dbReference type="GO" id="GO:0032153">
    <property type="term" value="C:cell division site"/>
    <property type="evidence" value="ECO:0007005"/>
    <property type="project" value="PomBase"/>
</dbReference>
<dbReference type="GO" id="GO:0051286">
    <property type="term" value="C:cell tip"/>
    <property type="evidence" value="ECO:0007005"/>
    <property type="project" value="PomBase"/>
</dbReference>
<dbReference type="GO" id="GO:0005829">
    <property type="term" value="C:cytosol"/>
    <property type="evidence" value="ECO:0007005"/>
    <property type="project" value="PomBase"/>
</dbReference>
<dbReference type="GO" id="GO:0005096">
    <property type="term" value="F:GTPase activator activity"/>
    <property type="evidence" value="ECO:0000255"/>
    <property type="project" value="PomBase"/>
</dbReference>
<dbReference type="GO" id="GO:0008289">
    <property type="term" value="F:lipid binding"/>
    <property type="evidence" value="ECO:0000255"/>
    <property type="project" value="PomBase"/>
</dbReference>
<dbReference type="GO" id="GO:0008270">
    <property type="term" value="F:zinc ion binding"/>
    <property type="evidence" value="ECO:0007669"/>
    <property type="project" value="UniProtKB-KW"/>
</dbReference>
<dbReference type="GO" id="GO:0006886">
    <property type="term" value="P:intracellular protein transport"/>
    <property type="evidence" value="ECO:0000303"/>
    <property type="project" value="PomBase"/>
</dbReference>
<dbReference type="GO" id="GO:0042147">
    <property type="term" value="P:retrograde transport, endosome to Golgi"/>
    <property type="evidence" value="ECO:0000250"/>
    <property type="project" value="PomBase"/>
</dbReference>
<dbReference type="CDD" id="cd08204">
    <property type="entry name" value="ArfGap"/>
    <property type="match status" value="1"/>
</dbReference>
<dbReference type="CDD" id="cd07608">
    <property type="entry name" value="BAR_ArfGAP_fungi"/>
    <property type="match status" value="1"/>
</dbReference>
<dbReference type="FunFam" id="2.30.29.30:FF:000252">
    <property type="entry name" value="ARF GTPase activator (Csx2)"/>
    <property type="match status" value="1"/>
</dbReference>
<dbReference type="FunFam" id="1.10.220.150:FF:000009">
    <property type="entry name" value="stromal membrane-associated protein 1 isoform X1"/>
    <property type="match status" value="1"/>
</dbReference>
<dbReference type="Gene3D" id="1.10.220.150">
    <property type="entry name" value="Arf GTPase activating protein"/>
    <property type="match status" value="1"/>
</dbReference>
<dbReference type="Gene3D" id="1.20.1270.60">
    <property type="entry name" value="Arfaptin homology (AH) domain/BAR domain"/>
    <property type="match status" value="1"/>
</dbReference>
<dbReference type="Gene3D" id="2.30.29.30">
    <property type="entry name" value="Pleckstrin-homology domain (PH domain)/Phosphotyrosine-binding domain (PTB)"/>
    <property type="match status" value="1"/>
</dbReference>
<dbReference type="InterPro" id="IPR045258">
    <property type="entry name" value="ACAP1/2/3-like"/>
</dbReference>
<dbReference type="InterPro" id="IPR027267">
    <property type="entry name" value="AH/BAR_dom_sf"/>
</dbReference>
<dbReference type="InterPro" id="IPR037278">
    <property type="entry name" value="ARFGAP/RecO"/>
</dbReference>
<dbReference type="InterPro" id="IPR001164">
    <property type="entry name" value="ArfGAP_dom"/>
</dbReference>
<dbReference type="InterPro" id="IPR038508">
    <property type="entry name" value="ArfGAP_dom_sf"/>
</dbReference>
<dbReference type="InterPro" id="IPR004148">
    <property type="entry name" value="BAR_dom"/>
</dbReference>
<dbReference type="InterPro" id="IPR011993">
    <property type="entry name" value="PH-like_dom_sf"/>
</dbReference>
<dbReference type="InterPro" id="IPR001849">
    <property type="entry name" value="PH_domain"/>
</dbReference>
<dbReference type="PANTHER" id="PTHR23180:SF160">
    <property type="entry name" value="ADP-RIBOSYLATION FACTOR GTPASE-ACTIVATING PROTEIN EFFECTOR PROTEIN 1"/>
    <property type="match status" value="1"/>
</dbReference>
<dbReference type="PANTHER" id="PTHR23180">
    <property type="entry name" value="CENTAURIN/ARF"/>
    <property type="match status" value="1"/>
</dbReference>
<dbReference type="Pfam" id="PF01412">
    <property type="entry name" value="ArfGap"/>
    <property type="match status" value="1"/>
</dbReference>
<dbReference type="Pfam" id="PF16746">
    <property type="entry name" value="BAR_3"/>
    <property type="match status" value="1"/>
</dbReference>
<dbReference type="Pfam" id="PF00169">
    <property type="entry name" value="PH"/>
    <property type="match status" value="1"/>
</dbReference>
<dbReference type="PRINTS" id="PR00405">
    <property type="entry name" value="REVINTRACTNG"/>
</dbReference>
<dbReference type="SMART" id="SM00105">
    <property type="entry name" value="ArfGap"/>
    <property type="match status" value="1"/>
</dbReference>
<dbReference type="SMART" id="SM00233">
    <property type="entry name" value="PH"/>
    <property type="match status" value="1"/>
</dbReference>
<dbReference type="SUPFAM" id="SSF57863">
    <property type="entry name" value="ArfGap/RecO-like zinc finger"/>
    <property type="match status" value="1"/>
</dbReference>
<dbReference type="SUPFAM" id="SSF103657">
    <property type="entry name" value="BAR/IMD domain-like"/>
    <property type="match status" value="1"/>
</dbReference>
<dbReference type="SUPFAM" id="SSF50729">
    <property type="entry name" value="PH domain-like"/>
    <property type="match status" value="1"/>
</dbReference>
<dbReference type="PROSITE" id="PS50115">
    <property type="entry name" value="ARFGAP"/>
    <property type="match status" value="1"/>
</dbReference>
<dbReference type="PROSITE" id="PS50003">
    <property type="entry name" value="PH_DOMAIN"/>
    <property type="match status" value="1"/>
</dbReference>
<accession>Q10165</accession>
<keyword id="KW-0963">Cytoplasm</keyword>
<keyword id="KW-0343">GTPase activation</keyword>
<keyword id="KW-0479">Metal-binding</keyword>
<keyword id="KW-0597">Phosphoprotein</keyword>
<keyword id="KW-1185">Reference proteome</keyword>
<keyword id="KW-0862">Zinc</keyword>
<keyword id="KW-0863">Zinc-finger</keyword>